<sequence>MKRLLLLEDGSVFEGEAFGADVETSGEIVFSTGMTGYQESITDQSYNGQIITFTYPLIGNYGINRDDYESIRPTCKGVVIYEWAEYPSNWRQQMTLDEFLKLKGIPGISGIDTRALTKIIRKHGTMKACLINEGNSIHEALENLQKSVLLNDQIEQVSTKLAYASPGVGKNIVLVDFGLKHSILRELSQRQCHITVVPHTTTAQEILNLNPDGVLLSNGPGNPEQLPNALQMIQEIQGKIPIFGICMGHQLFAKANGAKTYKMTFGHRGFNHAVRHLQTGQVDFTSQNHGYAVSREDFPEALFITHEEINDKTVEGVRHKYYPAFSVQFHPDAAPGPHDTSYLFDEFINMIDDFQQKS</sequence>
<name>CARA_STRA5</name>
<organism>
    <name type="scientific">Streptococcus agalactiae serotype V (strain ATCC BAA-611 / 2603 V/R)</name>
    <dbReference type="NCBI Taxonomy" id="208435"/>
    <lineage>
        <taxon>Bacteria</taxon>
        <taxon>Bacillati</taxon>
        <taxon>Bacillota</taxon>
        <taxon>Bacilli</taxon>
        <taxon>Lactobacillales</taxon>
        <taxon>Streptococcaceae</taxon>
        <taxon>Streptococcus</taxon>
    </lineage>
</organism>
<keyword id="KW-0028">Amino-acid biosynthesis</keyword>
<keyword id="KW-0055">Arginine biosynthesis</keyword>
<keyword id="KW-0067">ATP-binding</keyword>
<keyword id="KW-0315">Glutamine amidotransferase</keyword>
<keyword id="KW-0436">Ligase</keyword>
<keyword id="KW-0547">Nucleotide-binding</keyword>
<keyword id="KW-0665">Pyrimidine biosynthesis</keyword>
<keyword id="KW-1185">Reference proteome</keyword>
<accession>P63732</accession>
<accession>Q8DZQ6</accession>
<accession>Q8E5F4</accession>
<proteinExistence type="inferred from homology"/>
<reference key="1">
    <citation type="journal article" date="2002" name="Proc. Natl. Acad. Sci. U.S.A.">
        <title>Complete genome sequence and comparative genomic analysis of an emerging human pathogen, serotype V Streptococcus agalactiae.</title>
        <authorList>
            <person name="Tettelin H."/>
            <person name="Masignani V."/>
            <person name="Cieslewicz M.J."/>
            <person name="Eisen J.A."/>
            <person name="Peterson S.N."/>
            <person name="Wessels M.R."/>
            <person name="Paulsen I.T."/>
            <person name="Nelson K.E."/>
            <person name="Margarit I."/>
            <person name="Read T.D."/>
            <person name="Madoff L.C."/>
            <person name="Wolf A.M."/>
            <person name="Beanan M.J."/>
            <person name="Brinkac L.M."/>
            <person name="Daugherty S.C."/>
            <person name="DeBoy R.T."/>
            <person name="Durkin A.S."/>
            <person name="Kolonay J.F."/>
            <person name="Madupu R."/>
            <person name="Lewis M.R."/>
            <person name="Radune D."/>
            <person name="Fedorova N.B."/>
            <person name="Scanlan D."/>
            <person name="Khouri H.M."/>
            <person name="Mulligan S."/>
            <person name="Carty H.A."/>
            <person name="Cline R.T."/>
            <person name="Van Aken S.E."/>
            <person name="Gill J."/>
            <person name="Scarselli M."/>
            <person name="Mora M."/>
            <person name="Iacobini E.T."/>
            <person name="Brettoni C."/>
            <person name="Galli G."/>
            <person name="Mariani M."/>
            <person name="Vegni F."/>
            <person name="Maione D."/>
            <person name="Rinaudo D."/>
            <person name="Rappuoli R."/>
            <person name="Telford J.L."/>
            <person name="Kasper D.L."/>
            <person name="Grandi G."/>
            <person name="Fraser C.M."/>
        </authorList>
    </citation>
    <scope>NUCLEOTIDE SEQUENCE [LARGE SCALE GENOMIC DNA]</scope>
    <source>
        <strain>ATCC BAA-611 / 2603 V/R</strain>
    </source>
</reference>
<comment type="function">
    <text evidence="1">Small subunit of the glutamine-dependent carbamoyl phosphate synthetase (CPSase). CPSase catalyzes the formation of carbamoyl phosphate from the ammonia moiety of glutamine, carbonate, and phosphate donated by ATP, constituting the first step of 2 biosynthetic pathways, one leading to arginine and/or urea and the other to pyrimidine nucleotides. The small subunit (glutamine amidotransferase) binds and cleaves glutamine to supply the large subunit with the substrate ammonia.</text>
</comment>
<comment type="catalytic activity">
    <reaction evidence="1">
        <text>hydrogencarbonate + L-glutamine + 2 ATP + H2O = carbamoyl phosphate + L-glutamate + 2 ADP + phosphate + 2 H(+)</text>
        <dbReference type="Rhea" id="RHEA:18633"/>
        <dbReference type="ChEBI" id="CHEBI:15377"/>
        <dbReference type="ChEBI" id="CHEBI:15378"/>
        <dbReference type="ChEBI" id="CHEBI:17544"/>
        <dbReference type="ChEBI" id="CHEBI:29985"/>
        <dbReference type="ChEBI" id="CHEBI:30616"/>
        <dbReference type="ChEBI" id="CHEBI:43474"/>
        <dbReference type="ChEBI" id="CHEBI:58228"/>
        <dbReference type="ChEBI" id="CHEBI:58359"/>
        <dbReference type="ChEBI" id="CHEBI:456216"/>
        <dbReference type="EC" id="6.3.5.5"/>
    </reaction>
</comment>
<comment type="catalytic activity">
    <molecule>Carbamoyl phosphate synthase small chain</molecule>
    <reaction evidence="1">
        <text>L-glutamine + H2O = L-glutamate + NH4(+)</text>
        <dbReference type="Rhea" id="RHEA:15889"/>
        <dbReference type="ChEBI" id="CHEBI:15377"/>
        <dbReference type="ChEBI" id="CHEBI:28938"/>
        <dbReference type="ChEBI" id="CHEBI:29985"/>
        <dbReference type="ChEBI" id="CHEBI:58359"/>
    </reaction>
</comment>
<comment type="pathway">
    <text evidence="1">Amino-acid biosynthesis; L-arginine biosynthesis; carbamoyl phosphate from bicarbonate: step 1/1.</text>
</comment>
<comment type="pathway">
    <text evidence="1">Pyrimidine metabolism; UMP biosynthesis via de novo pathway; (S)-dihydroorotate from bicarbonate: step 1/3.</text>
</comment>
<comment type="subunit">
    <text evidence="1">Composed of two chains; the small (or glutamine) chain promotes the hydrolysis of glutamine to ammonia, which is used by the large (or ammonia) chain to synthesize carbamoyl phosphate. Tetramer of heterodimers (alpha,beta)4.</text>
</comment>
<comment type="similarity">
    <text evidence="1">Belongs to the CarA family.</text>
</comment>
<dbReference type="EC" id="6.3.5.5" evidence="1"/>
<dbReference type="EMBL" id="AE009948">
    <property type="protein sequence ID" value="AAM99925.1"/>
    <property type="molecule type" value="Genomic_DNA"/>
</dbReference>
<dbReference type="RefSeq" id="NP_688053.1">
    <property type="nucleotide sequence ID" value="NC_004116.1"/>
</dbReference>
<dbReference type="RefSeq" id="WP_000826109.1">
    <property type="nucleotide sequence ID" value="NC_004116.1"/>
</dbReference>
<dbReference type="SMR" id="P63732"/>
<dbReference type="STRING" id="208435.SAG1043"/>
<dbReference type="KEGG" id="sag:SAG1043"/>
<dbReference type="PATRIC" id="fig|208435.3.peg.1054"/>
<dbReference type="HOGENOM" id="CLU_035901_2_1_9"/>
<dbReference type="OrthoDB" id="9804328at2"/>
<dbReference type="UniPathway" id="UPA00068">
    <property type="reaction ID" value="UER00171"/>
</dbReference>
<dbReference type="UniPathway" id="UPA00070">
    <property type="reaction ID" value="UER00115"/>
</dbReference>
<dbReference type="Proteomes" id="UP000000821">
    <property type="component" value="Chromosome"/>
</dbReference>
<dbReference type="GO" id="GO:0005524">
    <property type="term" value="F:ATP binding"/>
    <property type="evidence" value="ECO:0007669"/>
    <property type="project" value="UniProtKB-UniRule"/>
</dbReference>
<dbReference type="GO" id="GO:0004088">
    <property type="term" value="F:carbamoyl-phosphate synthase (glutamine-hydrolyzing) activity"/>
    <property type="evidence" value="ECO:0007669"/>
    <property type="project" value="UniProtKB-UniRule"/>
</dbReference>
<dbReference type="GO" id="GO:0004359">
    <property type="term" value="F:glutaminase activity"/>
    <property type="evidence" value="ECO:0007669"/>
    <property type="project" value="RHEA"/>
</dbReference>
<dbReference type="GO" id="GO:0006207">
    <property type="term" value="P:'de novo' pyrimidine nucleobase biosynthetic process"/>
    <property type="evidence" value="ECO:0007669"/>
    <property type="project" value="InterPro"/>
</dbReference>
<dbReference type="GO" id="GO:0044205">
    <property type="term" value="P:'de novo' UMP biosynthetic process"/>
    <property type="evidence" value="ECO:0007669"/>
    <property type="project" value="UniProtKB-UniRule"/>
</dbReference>
<dbReference type="GO" id="GO:0006541">
    <property type="term" value="P:glutamine metabolic process"/>
    <property type="evidence" value="ECO:0007669"/>
    <property type="project" value="InterPro"/>
</dbReference>
<dbReference type="GO" id="GO:0006526">
    <property type="term" value="P:L-arginine biosynthetic process"/>
    <property type="evidence" value="ECO:0007669"/>
    <property type="project" value="UniProtKB-UniRule"/>
</dbReference>
<dbReference type="CDD" id="cd01744">
    <property type="entry name" value="GATase1_CPSase"/>
    <property type="match status" value="1"/>
</dbReference>
<dbReference type="FunFam" id="3.40.50.880:FF:000029">
    <property type="entry name" value="Carbamoyl-phosphate synthase small chain"/>
    <property type="match status" value="1"/>
</dbReference>
<dbReference type="FunFam" id="3.50.30.20:FF:000001">
    <property type="entry name" value="Carbamoyl-phosphate synthase small chain"/>
    <property type="match status" value="1"/>
</dbReference>
<dbReference type="Gene3D" id="3.40.50.880">
    <property type="match status" value="1"/>
</dbReference>
<dbReference type="Gene3D" id="3.50.30.20">
    <property type="entry name" value="Carbamoyl-phosphate synthase small subunit, N-terminal domain"/>
    <property type="match status" value="1"/>
</dbReference>
<dbReference type="HAMAP" id="MF_01209">
    <property type="entry name" value="CPSase_S_chain"/>
    <property type="match status" value="1"/>
</dbReference>
<dbReference type="InterPro" id="IPR050472">
    <property type="entry name" value="Anth_synth/Amidotransfase"/>
</dbReference>
<dbReference type="InterPro" id="IPR006274">
    <property type="entry name" value="CarbamoylP_synth_ssu"/>
</dbReference>
<dbReference type="InterPro" id="IPR002474">
    <property type="entry name" value="CarbamoylP_synth_ssu_N"/>
</dbReference>
<dbReference type="InterPro" id="IPR036480">
    <property type="entry name" value="CarbP_synth_ssu_N_sf"/>
</dbReference>
<dbReference type="InterPro" id="IPR029062">
    <property type="entry name" value="Class_I_gatase-like"/>
</dbReference>
<dbReference type="InterPro" id="IPR035686">
    <property type="entry name" value="CPSase_GATase1"/>
</dbReference>
<dbReference type="InterPro" id="IPR017926">
    <property type="entry name" value="GATASE"/>
</dbReference>
<dbReference type="NCBIfam" id="TIGR01368">
    <property type="entry name" value="CPSaseIIsmall"/>
    <property type="match status" value="1"/>
</dbReference>
<dbReference type="NCBIfam" id="NF009475">
    <property type="entry name" value="PRK12838.1"/>
    <property type="match status" value="1"/>
</dbReference>
<dbReference type="PANTHER" id="PTHR43418:SF7">
    <property type="entry name" value="CARBAMOYL-PHOSPHATE SYNTHASE SMALL CHAIN"/>
    <property type="match status" value="1"/>
</dbReference>
<dbReference type="PANTHER" id="PTHR43418">
    <property type="entry name" value="MULTIFUNCTIONAL TRYPTOPHAN BIOSYNTHESIS PROTEIN-RELATED"/>
    <property type="match status" value="1"/>
</dbReference>
<dbReference type="Pfam" id="PF00988">
    <property type="entry name" value="CPSase_sm_chain"/>
    <property type="match status" value="1"/>
</dbReference>
<dbReference type="Pfam" id="PF00117">
    <property type="entry name" value="GATase"/>
    <property type="match status" value="1"/>
</dbReference>
<dbReference type="PRINTS" id="PR00097">
    <property type="entry name" value="ANTSNTHASEII"/>
</dbReference>
<dbReference type="PRINTS" id="PR00099">
    <property type="entry name" value="CPSGATASE"/>
</dbReference>
<dbReference type="PRINTS" id="PR00096">
    <property type="entry name" value="GATASE"/>
</dbReference>
<dbReference type="SMART" id="SM01097">
    <property type="entry name" value="CPSase_sm_chain"/>
    <property type="match status" value="1"/>
</dbReference>
<dbReference type="SUPFAM" id="SSF52021">
    <property type="entry name" value="Carbamoyl phosphate synthetase, small subunit N-terminal domain"/>
    <property type="match status" value="1"/>
</dbReference>
<dbReference type="SUPFAM" id="SSF52317">
    <property type="entry name" value="Class I glutamine amidotransferase-like"/>
    <property type="match status" value="1"/>
</dbReference>
<dbReference type="PROSITE" id="PS51273">
    <property type="entry name" value="GATASE_TYPE_1"/>
    <property type="match status" value="1"/>
</dbReference>
<protein>
    <recommendedName>
        <fullName evidence="1">Carbamoyl phosphate synthase small chain</fullName>
        <ecNumber evidence="1">6.3.5.5</ecNumber>
    </recommendedName>
    <alternativeName>
        <fullName evidence="1">Carbamoyl phosphate synthetase glutamine chain</fullName>
    </alternativeName>
</protein>
<feature type="chain" id="PRO_0000112326" description="Carbamoyl phosphate synthase small chain">
    <location>
        <begin position="1"/>
        <end position="358"/>
    </location>
</feature>
<feature type="domain" description="Glutamine amidotransferase type-1" evidence="1">
    <location>
        <begin position="171"/>
        <end position="357"/>
    </location>
</feature>
<feature type="region of interest" description="CPSase" evidence="1">
    <location>
        <begin position="1"/>
        <end position="168"/>
    </location>
</feature>
<feature type="active site" description="Nucleophile" evidence="1">
    <location>
        <position position="246"/>
    </location>
</feature>
<feature type="active site" evidence="1">
    <location>
        <position position="330"/>
    </location>
</feature>
<feature type="active site" evidence="1">
    <location>
        <position position="332"/>
    </location>
</feature>
<feature type="binding site" evidence="1">
    <location>
        <position position="45"/>
    </location>
    <ligand>
        <name>L-glutamine</name>
        <dbReference type="ChEBI" id="CHEBI:58359"/>
    </ligand>
</feature>
<feature type="binding site" evidence="1">
    <location>
        <position position="219"/>
    </location>
    <ligand>
        <name>L-glutamine</name>
        <dbReference type="ChEBI" id="CHEBI:58359"/>
    </ligand>
</feature>
<feature type="binding site" evidence="1">
    <location>
        <position position="221"/>
    </location>
    <ligand>
        <name>L-glutamine</name>
        <dbReference type="ChEBI" id="CHEBI:58359"/>
    </ligand>
</feature>
<feature type="binding site" evidence="1">
    <location>
        <position position="247"/>
    </location>
    <ligand>
        <name>L-glutamine</name>
        <dbReference type="ChEBI" id="CHEBI:58359"/>
    </ligand>
</feature>
<feature type="binding site" evidence="1">
    <location>
        <position position="250"/>
    </location>
    <ligand>
        <name>L-glutamine</name>
        <dbReference type="ChEBI" id="CHEBI:58359"/>
    </ligand>
</feature>
<feature type="binding site" evidence="1">
    <location>
        <position position="288"/>
    </location>
    <ligand>
        <name>L-glutamine</name>
        <dbReference type="ChEBI" id="CHEBI:58359"/>
    </ligand>
</feature>
<feature type="binding site" evidence="1">
    <location>
        <position position="290"/>
    </location>
    <ligand>
        <name>L-glutamine</name>
        <dbReference type="ChEBI" id="CHEBI:58359"/>
    </ligand>
</feature>
<feature type="binding site" evidence="1">
    <location>
        <position position="291"/>
    </location>
    <ligand>
        <name>L-glutamine</name>
        <dbReference type="ChEBI" id="CHEBI:58359"/>
    </ligand>
</feature>
<evidence type="ECO:0000255" key="1">
    <source>
        <dbReference type="HAMAP-Rule" id="MF_01209"/>
    </source>
</evidence>
<gene>
    <name evidence="1" type="primary">carA</name>
    <name type="ordered locus">SAG1043</name>
</gene>